<keyword id="KW-0002">3D-structure</keyword>
<keyword id="KW-0025">Alternative splicing</keyword>
<keyword id="KW-0130">Cell adhesion</keyword>
<keyword id="KW-1003">Cell membrane</keyword>
<keyword id="KW-0966">Cell projection</keyword>
<keyword id="KW-0968">Cytoplasmic vesicle</keyword>
<keyword id="KW-1015">Disulfide bond</keyword>
<keyword id="KW-0325">Glycoprotein</keyword>
<keyword id="KW-0358">Heparin-binding</keyword>
<keyword id="KW-0378">Hydrolase</keyword>
<keyword id="KW-0393">Immunoglobulin domain</keyword>
<keyword id="KW-0472">Membrane</keyword>
<keyword id="KW-0904">Protein phosphatase</keyword>
<keyword id="KW-0675">Receptor</keyword>
<keyword id="KW-1185">Reference proteome</keyword>
<keyword id="KW-0677">Repeat</keyword>
<keyword id="KW-0732">Signal</keyword>
<keyword id="KW-0770">Synapse</keyword>
<keyword id="KW-0771">Synaptosome</keyword>
<keyword id="KW-0812">Transmembrane</keyword>
<keyword id="KW-1133">Transmembrane helix</keyword>
<gene>
    <name type="primary">Ptprs</name>
</gene>
<name>PTPRS_RAT</name>
<sequence length="1907" mass="211931">MAPTWRPSVVSVVGPVGLFLVLLARGCLAEEPPRFIREPKDQIGVSGGVASFVCQATGDPKPRVTWNKKGKKVNSQRFETIDFDESSGAVLRIQPLRTPRDENVYECVAQNSVGEITVHAKLTVLREDQLPPGFPNIDMGPQLKVVERTRTATMLCAASGNPDPEITWFKDFLPVDPSASNGRIKQLRSGALQIESSEETDQGKYECVATNSAGVRYSSPANLYVRVRRVAPRFSILPMSHEIMPGGNVNITCVAVGSPMPYVKWMQGAEDLTPEDDMPVGRNVLELTDVKDSANYTCVAMSSLGVIEAVAQITVKSLPKAPGTPVVTENTATSITVTWDSGNPDPVSYYVIEYKSKSQDGPYQIKEDITTTRYSIGGLSPNSEYEIWVSAVNSIGQGPPSESVVTRTGEQAPASAPRNVQARMLSATTMIVQWEEPVEPNGLIRGYRVYYTMEPEHPVGNWQKHNVDDSLLTTVGSLLEDETYTVRVLAFTSVGDGPLSDPIQVKTQQGVPGQPMNLRAEAKSETSIGLSWSAPRQESVIKYELLFREGDRGREVGRTFDPTTAFVVEDLKPNTEYAFRLAARSPQGLGAFTAVVRQRTLQAKPSAPPQDVKCTSLRSTAILVSWRPPPPETHNGALVGYSVRYRPLGSEDPDPKEVNNIPPTTTQILLEALEKWTEYRVTAVAYTEVGPGPESSPVVVRTDEDVPSAPPRKVEAEALNATAIRVLWRSPTPGRQHGQIRGYQVHYVRMEGAEARGPPRIKDIMLADAQEMVITNLQPETAYSITVAAYTMKGDGARSKPKVVVTKGAVLGRPTLSVQQTPEGSLLARWEPPADAAEDPVLGYRLQFGREDAAPATLELAAWERRFAAPAHKGATYVFRLAARGRAGLGEEASAALSIPEDAPRGFPQILGAAGNVSAGSVILRWLPPVPAERNGAIIKYTVSVREAGAPGPATETELAAAAQPGAETALTLQGLRPETAYELRVRAHTRRGPGPFSPPLRYRLARDPVSPKNFKVKMIMKTSVLLSWEFPDNYNSPTPYKIQYNGLTLDVDGRTTKKLITHLKPHTFYNFVLTNRGSSLGGLQQTVTARTAFNMLSGKPSVAPKPDNDGSIVVYLPDGQSPVTVQNYFIVMVPLRKSRGGQFPILLGSPEDMDLEELIQDLSRLQRRSLRHSRQLEVPRPYIAARFSILPAVFHPGNQKQYGGFDNRGLEPGHRYVLFVLAVLQKNEPTFAASPFSDPFQLDNPDPQPIVDGEEGLIWVIGPVLAVVFIICIVIAILLYKNKPDSKRKDSEPRTKCLLNNADLAPHHPKDPVEMRRINFQTPGMLSHPPIPITDMAEHMERLKANDSLKLSQEYESIDPGQQFTWEHSNLEANKPKNRYANVIAYDHSRVILQPLEGIMGSDYINANYVDGYRRQNAYIATQGPLPETFGDFWRMVWEQRSATVVMMTRLEEKSRVKCDQYWPNRGTETYGFIQVTLLDTMELATFCVRTFSLHKNGSSEKREVRHFQFTAWPDHGVPEYPTPFLAFLRRVKTCNPPDAGPVVVHCSAGVGRTGCFIVIDAMLERIRTEKTVDVYGHVTLMRSQRNYMVQTEDQYSFIHEALLEAVGCGNTEVPARSLYTYIQKLAQVEPGEHVTGMELEFKRLASSKAHTSRFITASLPCNKFKNRLVNILPYESSRVCLQPIRGVEGSDYINASFIDGYRQQKAYIATQGPLAETTEDFWRALWENNSTIVVMLTKLREMGREKCHQYWPAERSARYQYFVVDPMAEYNMPQYILREFKVTDARDGQSRTVRQFQFTDWPEQGAPKSGEGFIDFIGQVHKTKEQFGQDGPISVHCSAGVGRTGVFITLSIVLERMRYEGVVDIFQTVKVLRTQRPAMVQTEDEYQFCFQAALEYLGSFDHYAT</sequence>
<evidence type="ECO:0000250" key="1"/>
<evidence type="ECO:0000250" key="2">
    <source>
        <dbReference type="UniProtKB" id="B0V2N1"/>
    </source>
</evidence>
<evidence type="ECO:0000250" key="3">
    <source>
        <dbReference type="UniProtKB" id="F1NWE3"/>
    </source>
</evidence>
<evidence type="ECO:0000250" key="4">
    <source>
        <dbReference type="UniProtKB" id="Q13332"/>
    </source>
</evidence>
<evidence type="ECO:0000255" key="5"/>
<evidence type="ECO:0000255" key="6">
    <source>
        <dbReference type="PROSITE-ProRule" id="PRU00114"/>
    </source>
</evidence>
<evidence type="ECO:0000255" key="7">
    <source>
        <dbReference type="PROSITE-ProRule" id="PRU00160"/>
    </source>
</evidence>
<evidence type="ECO:0000255" key="8">
    <source>
        <dbReference type="PROSITE-ProRule" id="PRU00316"/>
    </source>
</evidence>
<evidence type="ECO:0000255" key="9">
    <source>
        <dbReference type="PROSITE-ProRule" id="PRU10044"/>
    </source>
</evidence>
<evidence type="ECO:0000256" key="10">
    <source>
        <dbReference type="SAM" id="MobiDB-lite"/>
    </source>
</evidence>
<evidence type="ECO:0000269" key="11">
    <source>
    </source>
</evidence>
<evidence type="ECO:0000269" key="12">
    <source>
    </source>
</evidence>
<evidence type="ECO:0000269" key="13">
    <source>
    </source>
</evidence>
<evidence type="ECO:0000303" key="14">
    <source>
    </source>
</evidence>
<evidence type="ECO:0000305" key="15"/>
<evidence type="ECO:0007829" key="16">
    <source>
        <dbReference type="PDB" id="2NV5"/>
    </source>
</evidence>
<dbReference type="EC" id="3.1.3.48" evidence="13"/>
<dbReference type="EMBL" id="L11587">
    <property type="protein sequence ID" value="AAC37656.1"/>
    <property type="molecule type" value="mRNA"/>
</dbReference>
<dbReference type="EMBL" id="BC105753">
    <property type="protein sequence ID" value="AAI05754.1"/>
    <property type="molecule type" value="mRNA"/>
</dbReference>
<dbReference type="PIR" id="I58148">
    <property type="entry name" value="I58148"/>
</dbReference>
<dbReference type="PIR" id="S46217">
    <property type="entry name" value="S46217"/>
</dbReference>
<dbReference type="RefSeq" id="NP_001418666.1">
    <molecule id="Q64605-1"/>
    <property type="nucleotide sequence ID" value="NM_001431737.1"/>
</dbReference>
<dbReference type="RefSeq" id="NP_001418671.1">
    <molecule id="Q64605-1"/>
    <property type="nucleotide sequence ID" value="NM_001431742.1"/>
</dbReference>
<dbReference type="RefSeq" id="NP_062013.2">
    <molecule id="Q64605-2"/>
    <property type="nucleotide sequence ID" value="NM_019140.4"/>
</dbReference>
<dbReference type="PDB" id="2NV5">
    <property type="method" value="X-ray"/>
    <property type="resolution" value="2.00 A"/>
    <property type="chains" value="A/B/C=1328-1614"/>
</dbReference>
<dbReference type="PDBsum" id="2NV5"/>
<dbReference type="SMR" id="Q64605"/>
<dbReference type="BioGRID" id="247561">
    <property type="interactions" value="3"/>
</dbReference>
<dbReference type="FunCoup" id="Q64605">
    <property type="interactions" value="1741"/>
</dbReference>
<dbReference type="STRING" id="10116.ENSRNOP00000065227"/>
<dbReference type="GlyCosmos" id="Q64605">
    <property type="glycosylation" value="4 sites, No reported glycans"/>
</dbReference>
<dbReference type="GlyGen" id="Q64605">
    <property type="glycosylation" value="5 sites"/>
</dbReference>
<dbReference type="iPTMnet" id="Q64605"/>
<dbReference type="PhosphoSitePlus" id="Q64605"/>
<dbReference type="PaxDb" id="10116-ENSRNOP00000065227"/>
<dbReference type="ABCD" id="Q64605">
    <property type="antibodies" value="1 sequenced antibody"/>
</dbReference>
<dbReference type="Ensembl" id="ENSRNOT00000073991.4">
    <molecule id="Q64605-2"/>
    <property type="protein sequence ID" value="ENSRNOP00000065227.3"/>
    <property type="gene ID" value="ENSRNOG00000047247.4"/>
</dbReference>
<dbReference type="Ensembl" id="ENSRNOT00000103214.1">
    <molecule id="Q64605-1"/>
    <property type="protein sequence ID" value="ENSRNOP00000084874.1"/>
    <property type="gene ID" value="ENSRNOG00000047247.4"/>
</dbReference>
<dbReference type="GeneID" id="25529"/>
<dbReference type="KEGG" id="rno:25529"/>
<dbReference type="AGR" id="RGD:3452"/>
<dbReference type="CTD" id="5802"/>
<dbReference type="RGD" id="3452">
    <property type="gene designation" value="Ptprs"/>
</dbReference>
<dbReference type="eggNOG" id="KOG4228">
    <property type="taxonomic scope" value="Eukaryota"/>
</dbReference>
<dbReference type="GeneTree" id="ENSGT00940000153617"/>
<dbReference type="InParanoid" id="Q64605"/>
<dbReference type="PhylomeDB" id="Q64605"/>
<dbReference type="Reactome" id="R-RNO-388844">
    <property type="pathway name" value="Receptor-type tyrosine-protein phosphatases"/>
</dbReference>
<dbReference type="Reactome" id="R-RNO-8849932">
    <property type="pathway name" value="Synaptic adhesion-like molecules"/>
</dbReference>
<dbReference type="EvolutionaryTrace" id="Q64605"/>
<dbReference type="PRO" id="PR:Q64605"/>
<dbReference type="Proteomes" id="UP000002494">
    <property type="component" value="Chromosome 9"/>
</dbReference>
<dbReference type="GO" id="GO:0030424">
    <property type="term" value="C:axon"/>
    <property type="evidence" value="ECO:0000250"/>
    <property type="project" value="UniProtKB"/>
</dbReference>
<dbReference type="GO" id="GO:0098978">
    <property type="term" value="C:glutamatergic synapse"/>
    <property type="evidence" value="ECO:0000314"/>
    <property type="project" value="SynGO"/>
</dbReference>
<dbReference type="GO" id="GO:0030426">
    <property type="term" value="C:growth cone"/>
    <property type="evidence" value="ECO:0007669"/>
    <property type="project" value="UniProtKB-SubCell"/>
</dbReference>
<dbReference type="GO" id="GO:0043204">
    <property type="term" value="C:perikaryon"/>
    <property type="evidence" value="ECO:0007669"/>
    <property type="project" value="UniProtKB-SubCell"/>
</dbReference>
<dbReference type="GO" id="GO:0005886">
    <property type="term" value="C:plasma membrane"/>
    <property type="evidence" value="ECO:0000266"/>
    <property type="project" value="RGD"/>
</dbReference>
<dbReference type="GO" id="GO:0098839">
    <property type="term" value="C:postsynaptic density membrane"/>
    <property type="evidence" value="ECO:0000314"/>
    <property type="project" value="UniProtKB"/>
</dbReference>
<dbReference type="GO" id="GO:0042734">
    <property type="term" value="C:presynaptic membrane"/>
    <property type="evidence" value="ECO:0000314"/>
    <property type="project" value="SynGO"/>
</dbReference>
<dbReference type="GO" id="GO:0098685">
    <property type="term" value="C:Schaffer collateral - CA1 synapse"/>
    <property type="evidence" value="ECO:0000266"/>
    <property type="project" value="RGD"/>
</dbReference>
<dbReference type="GO" id="GO:0030672">
    <property type="term" value="C:synaptic vesicle membrane"/>
    <property type="evidence" value="ECO:0000314"/>
    <property type="project" value="UniProtKB"/>
</dbReference>
<dbReference type="GO" id="GO:0035374">
    <property type="term" value="F:chondroitin sulfate binding"/>
    <property type="evidence" value="ECO:0000250"/>
    <property type="project" value="UniProtKB"/>
</dbReference>
<dbReference type="GO" id="GO:0043395">
    <property type="term" value="F:heparan sulfate proteoglycan binding"/>
    <property type="evidence" value="ECO:0000250"/>
    <property type="project" value="UniProtKB"/>
</dbReference>
<dbReference type="GO" id="GO:0008201">
    <property type="term" value="F:heparin binding"/>
    <property type="evidence" value="ECO:0000250"/>
    <property type="project" value="UniProtKB"/>
</dbReference>
<dbReference type="GO" id="GO:0004721">
    <property type="term" value="F:phosphoprotein phosphatase activity"/>
    <property type="evidence" value="ECO:0000266"/>
    <property type="project" value="RGD"/>
</dbReference>
<dbReference type="GO" id="GO:0004725">
    <property type="term" value="F:protein tyrosine phosphatase activity"/>
    <property type="evidence" value="ECO:0000314"/>
    <property type="project" value="RGD"/>
</dbReference>
<dbReference type="GO" id="GO:0021549">
    <property type="term" value="P:cerebellum development"/>
    <property type="evidence" value="ECO:0000266"/>
    <property type="project" value="RGD"/>
</dbReference>
<dbReference type="GO" id="GO:0021987">
    <property type="term" value="P:cerebral cortex development"/>
    <property type="evidence" value="ECO:0000266"/>
    <property type="project" value="RGD"/>
</dbReference>
<dbReference type="GO" id="GO:0022038">
    <property type="term" value="P:corpus callosum development"/>
    <property type="evidence" value="ECO:0000266"/>
    <property type="project" value="RGD"/>
</dbReference>
<dbReference type="GO" id="GO:0090557">
    <property type="term" value="P:establishment of endothelial intestinal barrier"/>
    <property type="evidence" value="ECO:0000266"/>
    <property type="project" value="RGD"/>
</dbReference>
<dbReference type="GO" id="GO:0021766">
    <property type="term" value="P:hippocampus development"/>
    <property type="evidence" value="ECO:0000266"/>
    <property type="project" value="RGD"/>
</dbReference>
<dbReference type="GO" id="GO:0050804">
    <property type="term" value="P:modulation of chemical synaptic transmission"/>
    <property type="evidence" value="ECO:0000266"/>
    <property type="project" value="RGD"/>
</dbReference>
<dbReference type="GO" id="GO:0030517">
    <property type="term" value="P:negative regulation of axon extension"/>
    <property type="evidence" value="ECO:0000250"/>
    <property type="project" value="UniProtKB"/>
</dbReference>
<dbReference type="GO" id="GO:0048681">
    <property type="term" value="P:negative regulation of axon regeneration"/>
    <property type="evidence" value="ECO:0000250"/>
    <property type="project" value="UniProtKB"/>
</dbReference>
<dbReference type="GO" id="GO:0048671">
    <property type="term" value="P:negative regulation of collateral sprouting"/>
    <property type="evidence" value="ECO:0000250"/>
    <property type="project" value="UniProtKB"/>
</dbReference>
<dbReference type="GO" id="GO:0061000">
    <property type="term" value="P:negative regulation of dendritic spine development"/>
    <property type="evidence" value="ECO:0000250"/>
    <property type="project" value="UniProtKB"/>
</dbReference>
<dbReference type="GO" id="GO:0032687">
    <property type="term" value="P:negative regulation of interferon-alpha production"/>
    <property type="evidence" value="ECO:0000266"/>
    <property type="project" value="RGD"/>
</dbReference>
<dbReference type="GO" id="GO:0032688">
    <property type="term" value="P:negative regulation of interferon-beta production"/>
    <property type="evidence" value="ECO:0000266"/>
    <property type="project" value="RGD"/>
</dbReference>
<dbReference type="GO" id="GO:0010977">
    <property type="term" value="P:negative regulation of neuron projection development"/>
    <property type="evidence" value="ECO:0000250"/>
    <property type="project" value="UniProtKB"/>
</dbReference>
<dbReference type="GO" id="GO:0034164">
    <property type="term" value="P:negative regulation of toll-like receptor 9 signaling pathway"/>
    <property type="evidence" value="ECO:0000266"/>
    <property type="project" value="RGD"/>
</dbReference>
<dbReference type="GO" id="GO:0099054">
    <property type="term" value="P:presynapse assembly"/>
    <property type="evidence" value="ECO:0000314"/>
    <property type="project" value="SynGO"/>
</dbReference>
<dbReference type="GO" id="GO:0099151">
    <property type="term" value="P:regulation of postsynaptic density assembly"/>
    <property type="evidence" value="ECO:0000314"/>
    <property type="project" value="SynGO"/>
</dbReference>
<dbReference type="GO" id="GO:0007165">
    <property type="term" value="P:signal transduction"/>
    <property type="evidence" value="ECO:0000318"/>
    <property type="project" value="GO_Central"/>
</dbReference>
<dbReference type="GO" id="GO:0021510">
    <property type="term" value="P:spinal cord development"/>
    <property type="evidence" value="ECO:0000266"/>
    <property type="project" value="RGD"/>
</dbReference>
<dbReference type="GO" id="GO:0050808">
    <property type="term" value="P:synapse organization"/>
    <property type="evidence" value="ECO:0000266"/>
    <property type="project" value="RGD"/>
</dbReference>
<dbReference type="GO" id="GO:0099560">
    <property type="term" value="P:synaptic membrane adhesion"/>
    <property type="evidence" value="ECO:0000314"/>
    <property type="project" value="SynGO"/>
</dbReference>
<dbReference type="GO" id="GO:0099537">
    <property type="term" value="P:trans-synaptic signaling"/>
    <property type="evidence" value="ECO:0000266"/>
    <property type="project" value="RGD"/>
</dbReference>
<dbReference type="CDD" id="cd00063">
    <property type="entry name" value="FN3"/>
    <property type="match status" value="7"/>
</dbReference>
<dbReference type="CDD" id="cd05738">
    <property type="entry name" value="IgI_2_RPTP_IIa_LAR_like"/>
    <property type="match status" value="1"/>
</dbReference>
<dbReference type="CDD" id="cd05739">
    <property type="entry name" value="IgI_3_RPTP_IIa_LAR_like"/>
    <property type="match status" value="1"/>
</dbReference>
<dbReference type="CDD" id="cd14627">
    <property type="entry name" value="R-PTP-S-2"/>
    <property type="match status" value="1"/>
</dbReference>
<dbReference type="CDD" id="cd14625">
    <property type="entry name" value="R-PTPc-S-1"/>
    <property type="match status" value="1"/>
</dbReference>
<dbReference type="FunFam" id="2.60.40.10:FF:000549">
    <property type="entry name" value="Protein tyrosine phosphatase, receptor type S"/>
    <property type="match status" value="1"/>
</dbReference>
<dbReference type="FunFam" id="2.60.40.10:FF:000010">
    <property type="entry name" value="receptor-type tyrosine-protein phosphatase delta isoform X1"/>
    <property type="match status" value="1"/>
</dbReference>
<dbReference type="FunFam" id="2.60.40.10:FF:000027">
    <property type="entry name" value="receptor-type tyrosine-protein phosphatase delta isoform X1"/>
    <property type="match status" value="1"/>
</dbReference>
<dbReference type="FunFam" id="2.60.40.10:FF:000036">
    <property type="entry name" value="receptor-type tyrosine-protein phosphatase delta isoform X1"/>
    <property type="match status" value="1"/>
</dbReference>
<dbReference type="FunFam" id="2.60.40.10:FF:000066">
    <property type="entry name" value="receptor-type tyrosine-protein phosphatase delta isoform X1"/>
    <property type="match status" value="1"/>
</dbReference>
<dbReference type="FunFam" id="2.60.40.10:FF:000068">
    <property type="entry name" value="receptor-type tyrosine-protein phosphatase delta isoform X1"/>
    <property type="match status" value="1"/>
</dbReference>
<dbReference type="FunFam" id="2.60.40.10:FF:000144">
    <property type="entry name" value="receptor-type tyrosine-protein phosphatase delta isoform X1"/>
    <property type="match status" value="1"/>
</dbReference>
<dbReference type="FunFam" id="2.60.40.10:FF:000015">
    <property type="entry name" value="receptor-type tyrosine-protein phosphatase delta isoform X2"/>
    <property type="match status" value="1"/>
</dbReference>
<dbReference type="FunFam" id="2.60.40.10:FF:000023">
    <property type="entry name" value="receptor-type tyrosine-protein phosphatase delta isoform X2"/>
    <property type="match status" value="1"/>
</dbReference>
<dbReference type="FunFam" id="2.60.40.10:FF:000082">
    <property type="entry name" value="receptor-type tyrosine-protein phosphatase delta isoform X2"/>
    <property type="match status" value="1"/>
</dbReference>
<dbReference type="FunFam" id="3.90.190.10:FF:000002">
    <property type="entry name" value="receptor-type tyrosine-protein phosphatase delta isoform X2"/>
    <property type="match status" value="1"/>
</dbReference>
<dbReference type="FunFam" id="3.90.190.10:FF:000001">
    <property type="entry name" value="Receptor-type tyrosine-protein phosphatase F isoform A"/>
    <property type="match status" value="1"/>
</dbReference>
<dbReference type="FunFam" id="2.60.40.10:FF:000098">
    <property type="entry name" value="receptor-type tyrosine-protein phosphatase F isoform X1"/>
    <property type="match status" value="1"/>
</dbReference>
<dbReference type="Gene3D" id="2.60.40.10">
    <property type="entry name" value="Immunoglobulins"/>
    <property type="match status" value="11"/>
</dbReference>
<dbReference type="Gene3D" id="3.90.190.10">
    <property type="entry name" value="Protein tyrosine phosphatase superfamily"/>
    <property type="match status" value="2"/>
</dbReference>
<dbReference type="InterPro" id="IPR003961">
    <property type="entry name" value="FN3_dom"/>
</dbReference>
<dbReference type="InterPro" id="IPR036116">
    <property type="entry name" value="FN3_sf"/>
</dbReference>
<dbReference type="InterPro" id="IPR007110">
    <property type="entry name" value="Ig-like_dom"/>
</dbReference>
<dbReference type="InterPro" id="IPR036179">
    <property type="entry name" value="Ig-like_dom_sf"/>
</dbReference>
<dbReference type="InterPro" id="IPR013783">
    <property type="entry name" value="Ig-like_fold"/>
</dbReference>
<dbReference type="InterPro" id="IPR013098">
    <property type="entry name" value="Ig_I-set"/>
</dbReference>
<dbReference type="InterPro" id="IPR003599">
    <property type="entry name" value="Ig_sub"/>
</dbReference>
<dbReference type="InterPro" id="IPR003598">
    <property type="entry name" value="Ig_sub2"/>
</dbReference>
<dbReference type="InterPro" id="IPR029021">
    <property type="entry name" value="Prot-tyrosine_phosphatase-like"/>
</dbReference>
<dbReference type="InterPro" id="IPR000242">
    <property type="entry name" value="PTP_cat"/>
</dbReference>
<dbReference type="InterPro" id="IPR050713">
    <property type="entry name" value="RTP_Phos/Ushers"/>
</dbReference>
<dbReference type="InterPro" id="IPR016130">
    <property type="entry name" value="Tyr_Pase_AS"/>
</dbReference>
<dbReference type="InterPro" id="IPR003595">
    <property type="entry name" value="Tyr_Pase_cat"/>
</dbReference>
<dbReference type="InterPro" id="IPR000387">
    <property type="entry name" value="Tyr_Pase_dom"/>
</dbReference>
<dbReference type="PANTHER" id="PTHR46957">
    <property type="entry name" value="CYTOKINE RECEPTOR"/>
    <property type="match status" value="1"/>
</dbReference>
<dbReference type="PANTHER" id="PTHR46957:SF6">
    <property type="entry name" value="PROTEIN-TYROSINE-PHOSPHATASE"/>
    <property type="match status" value="1"/>
</dbReference>
<dbReference type="Pfam" id="PF00041">
    <property type="entry name" value="fn3"/>
    <property type="match status" value="7"/>
</dbReference>
<dbReference type="Pfam" id="PF07679">
    <property type="entry name" value="I-set"/>
    <property type="match status" value="2"/>
</dbReference>
<dbReference type="Pfam" id="PF13927">
    <property type="entry name" value="Ig_3"/>
    <property type="match status" value="1"/>
</dbReference>
<dbReference type="Pfam" id="PF00102">
    <property type="entry name" value="Y_phosphatase"/>
    <property type="match status" value="2"/>
</dbReference>
<dbReference type="PRINTS" id="PR00014">
    <property type="entry name" value="FNTYPEIII"/>
</dbReference>
<dbReference type="PRINTS" id="PR00700">
    <property type="entry name" value="PRTYPHPHTASE"/>
</dbReference>
<dbReference type="SMART" id="SM00060">
    <property type="entry name" value="FN3"/>
    <property type="match status" value="8"/>
</dbReference>
<dbReference type="SMART" id="SM00409">
    <property type="entry name" value="IG"/>
    <property type="match status" value="3"/>
</dbReference>
<dbReference type="SMART" id="SM00408">
    <property type="entry name" value="IGc2"/>
    <property type="match status" value="3"/>
</dbReference>
<dbReference type="SMART" id="SM00194">
    <property type="entry name" value="PTPc"/>
    <property type="match status" value="2"/>
</dbReference>
<dbReference type="SMART" id="SM00404">
    <property type="entry name" value="PTPc_motif"/>
    <property type="match status" value="2"/>
</dbReference>
<dbReference type="SUPFAM" id="SSF52799">
    <property type="entry name" value="(Phosphotyrosine protein) phosphatases II"/>
    <property type="match status" value="2"/>
</dbReference>
<dbReference type="SUPFAM" id="SSF49265">
    <property type="entry name" value="Fibronectin type III"/>
    <property type="match status" value="5"/>
</dbReference>
<dbReference type="SUPFAM" id="SSF48726">
    <property type="entry name" value="Immunoglobulin"/>
    <property type="match status" value="3"/>
</dbReference>
<dbReference type="PROSITE" id="PS50853">
    <property type="entry name" value="FN3"/>
    <property type="match status" value="8"/>
</dbReference>
<dbReference type="PROSITE" id="PS50835">
    <property type="entry name" value="IG_LIKE"/>
    <property type="match status" value="3"/>
</dbReference>
<dbReference type="PROSITE" id="PS00383">
    <property type="entry name" value="TYR_PHOSPHATASE_1"/>
    <property type="match status" value="2"/>
</dbReference>
<dbReference type="PROSITE" id="PS50056">
    <property type="entry name" value="TYR_PHOSPHATASE_2"/>
    <property type="match status" value="2"/>
</dbReference>
<dbReference type="PROSITE" id="PS50055">
    <property type="entry name" value="TYR_PHOSPHATASE_PTP"/>
    <property type="match status" value="2"/>
</dbReference>
<feature type="signal peptide" evidence="5">
    <location>
        <begin position="1"/>
        <end position="29"/>
    </location>
</feature>
<feature type="chain" id="PRO_5000142153" description="Receptor-type tyrosine-protein phosphatase S">
    <location>
        <begin position="30"/>
        <end position="1907"/>
    </location>
</feature>
<feature type="topological domain" description="Extracellular" evidence="5">
    <location>
        <begin position="30"/>
        <end position="1257"/>
    </location>
</feature>
<feature type="transmembrane region" description="Helical" evidence="5">
    <location>
        <begin position="1258"/>
        <end position="1278"/>
    </location>
</feature>
<feature type="topological domain" description="Cytoplasmic" evidence="5">
    <location>
        <begin position="1279"/>
        <end position="1907"/>
    </location>
</feature>
<feature type="domain" description="Ig-like C2-type 1">
    <location>
        <begin position="33"/>
        <end position="123"/>
    </location>
</feature>
<feature type="domain" description="Ig-like C2-type 2">
    <location>
        <begin position="135"/>
        <end position="224"/>
    </location>
</feature>
<feature type="domain" description="Ig-like C2-type 3">
    <location>
        <begin position="232"/>
        <end position="314"/>
    </location>
</feature>
<feature type="domain" description="Fibronectin type-III 1" evidence="8">
    <location>
        <begin position="321"/>
        <end position="411"/>
    </location>
</feature>
<feature type="domain" description="Fibronectin type-III 2" evidence="8">
    <location>
        <begin position="416"/>
        <end position="510"/>
    </location>
</feature>
<feature type="domain" description="Fibronectin type-III 3" evidence="8">
    <location>
        <begin position="514"/>
        <end position="603"/>
    </location>
</feature>
<feature type="domain" description="Fibronectin type-III 4" evidence="8">
    <location>
        <begin position="608"/>
        <end position="705"/>
    </location>
</feature>
<feature type="domain" description="Fibronectin type-III 5" evidence="8">
    <location>
        <begin position="710"/>
        <end position="809"/>
    </location>
</feature>
<feature type="domain" description="Fibronectin type-III 6" evidence="8">
    <location>
        <begin position="810"/>
        <end position="906"/>
    </location>
</feature>
<feature type="domain" description="Fibronectin type-III 7" evidence="8">
    <location>
        <begin position="907"/>
        <end position="1008"/>
    </location>
</feature>
<feature type="domain" description="Fibronectin type-III 8" evidence="8">
    <location>
        <begin position="1011"/>
        <end position="1095"/>
    </location>
</feature>
<feature type="domain" description="Tyrosine-protein phosphatase 1" evidence="7">
    <location>
        <begin position="1352"/>
        <end position="1607"/>
    </location>
</feature>
<feature type="domain" description="Tyrosine-protein phosphatase 2" evidence="7">
    <location>
        <begin position="1639"/>
        <end position="1898"/>
    </location>
</feature>
<feature type="region of interest" description="Important for binding to glycosaminoglycan chains" evidence="2">
    <location>
        <begin position="68"/>
        <end position="72"/>
    </location>
</feature>
<feature type="region of interest" description="Disordered" evidence="10">
    <location>
        <begin position="691"/>
        <end position="711"/>
    </location>
</feature>
<feature type="region of interest" description="Disordered" evidence="10">
    <location>
        <begin position="1286"/>
        <end position="1313"/>
    </location>
</feature>
<feature type="compositionally biased region" description="Low complexity" evidence="10">
    <location>
        <begin position="691"/>
        <end position="700"/>
    </location>
</feature>
<feature type="compositionally biased region" description="Basic and acidic residues" evidence="10">
    <location>
        <begin position="1286"/>
        <end position="1296"/>
    </location>
</feature>
<feature type="active site" description="Phosphocysteine intermediate" evidence="1">
    <location>
        <position position="1548"/>
    </location>
</feature>
<feature type="active site" description="Phosphocysteine intermediate" evidence="1">
    <location>
        <position position="1839"/>
    </location>
</feature>
<feature type="binding site" evidence="1">
    <location>
        <position position="1516"/>
    </location>
    <ligand>
        <name>substrate</name>
    </ligand>
</feature>
<feature type="binding site" evidence="1">
    <location>
        <begin position="1548"/>
        <end position="1554"/>
    </location>
    <ligand>
        <name>substrate</name>
    </ligand>
</feature>
<feature type="binding site" evidence="1">
    <location>
        <position position="1592"/>
    </location>
    <ligand>
        <name>substrate</name>
    </ligand>
</feature>
<feature type="site" description="Cleavage" evidence="1">
    <location>
        <begin position="1172"/>
        <end position="1173"/>
    </location>
</feature>
<feature type="glycosylation site" description="N-linked (GlcNAc...) asparagine" evidence="5">
    <location>
        <position position="250"/>
    </location>
</feature>
<feature type="glycosylation site" description="N-linked (GlcNAc...) asparagine" evidence="5">
    <location>
        <position position="295"/>
    </location>
</feature>
<feature type="glycosylation site" description="N-linked (GlcNAc...) asparagine" evidence="5">
    <location>
        <position position="720"/>
    </location>
</feature>
<feature type="glycosylation site" description="N-linked (GlcNAc...) asparagine" evidence="5">
    <location>
        <position position="916"/>
    </location>
</feature>
<feature type="disulfide bond" evidence="6">
    <location>
        <begin position="54"/>
        <end position="107"/>
    </location>
</feature>
<feature type="disulfide bond" evidence="6">
    <location>
        <begin position="156"/>
        <end position="207"/>
    </location>
</feature>
<feature type="disulfide bond" evidence="6">
    <location>
        <begin position="253"/>
        <end position="298"/>
    </location>
</feature>
<feature type="splice variant" id="VSP_026932" description="In isoform 2." evidence="14">
    <original>VSWRPPPPETHNGALVGYSVRYRPLGSEDPDPKEVNNIPPTTTQI</original>
    <variation>I</variation>
    <location>
        <begin position="624"/>
        <end position="668"/>
    </location>
</feature>
<feature type="sequence conflict" description="In Ref. 1; AAC37656." evidence="15" ref="1">
    <original>R</original>
    <variation>C</variation>
    <location>
        <position position="597"/>
    </location>
</feature>
<feature type="sequence conflict" description="In Ref. 1; AAC37656." evidence="15" ref="1">
    <original>A</original>
    <variation>T</variation>
    <location>
        <position position="753"/>
    </location>
</feature>
<feature type="sequence conflict" description="In Ref. 1; AAC37656." evidence="15" ref="1">
    <original>A</original>
    <variation>P</variation>
    <location>
        <position position="913"/>
    </location>
</feature>
<feature type="sequence conflict" description="In Ref. 1; AAC37656." evidence="15" ref="1">
    <original>R</original>
    <variation>G</variation>
    <location>
        <position position="934"/>
    </location>
</feature>
<feature type="sequence conflict" description="In Ref. 1; AAC37656." evidence="15" ref="1">
    <original>A</original>
    <variation>T</variation>
    <location>
        <position position="950"/>
    </location>
</feature>
<feature type="helix" evidence="16">
    <location>
        <begin position="1334"/>
        <end position="1336"/>
    </location>
</feature>
<feature type="helix" evidence="16">
    <location>
        <begin position="1337"/>
        <end position="1358"/>
    </location>
</feature>
<feature type="helix" evidence="16">
    <location>
        <begin position="1369"/>
        <end position="1371"/>
    </location>
</feature>
<feature type="turn" evidence="16">
    <location>
        <begin position="1373"/>
        <end position="1375"/>
    </location>
</feature>
<feature type="helix" evidence="16">
    <location>
        <begin position="1376"/>
        <end position="1378"/>
    </location>
</feature>
<feature type="helix" evidence="16">
    <location>
        <begin position="1388"/>
        <end position="1390"/>
    </location>
</feature>
<feature type="strand" evidence="16">
    <location>
        <begin position="1391"/>
        <end position="1393"/>
    </location>
</feature>
<feature type="turn" evidence="16">
    <location>
        <begin position="1401"/>
        <end position="1404"/>
    </location>
</feature>
<feature type="strand" evidence="16">
    <location>
        <begin position="1405"/>
        <end position="1413"/>
    </location>
</feature>
<feature type="strand" evidence="16">
    <location>
        <begin position="1416"/>
        <end position="1423"/>
    </location>
</feature>
<feature type="helix" evidence="16">
    <location>
        <begin position="1428"/>
        <end position="1430"/>
    </location>
</feature>
<feature type="helix" evidence="16">
    <location>
        <begin position="1431"/>
        <end position="1440"/>
    </location>
</feature>
<feature type="strand" evidence="16">
    <location>
        <begin position="1445"/>
        <end position="1448"/>
    </location>
</feature>
<feature type="strand" evidence="16">
    <location>
        <begin position="1452"/>
        <end position="1454"/>
    </location>
</feature>
<feature type="strand" evidence="16">
    <location>
        <begin position="1457"/>
        <end position="1460"/>
    </location>
</feature>
<feature type="strand" evidence="16">
    <location>
        <begin position="1466"/>
        <end position="1472"/>
    </location>
</feature>
<feature type="strand" evidence="16">
    <location>
        <begin position="1475"/>
        <end position="1484"/>
    </location>
</feature>
<feature type="strand" evidence="16">
    <location>
        <begin position="1486"/>
        <end position="1497"/>
    </location>
</feature>
<feature type="strand" evidence="16">
    <location>
        <begin position="1504"/>
        <end position="1511"/>
    </location>
</feature>
<feature type="strand" evidence="16">
    <location>
        <begin position="1516"/>
        <end position="1519"/>
    </location>
</feature>
<feature type="helix" evidence="16">
    <location>
        <begin position="1524"/>
        <end position="1536"/>
    </location>
</feature>
<feature type="strand" evidence="16">
    <location>
        <begin position="1544"/>
        <end position="1553"/>
    </location>
</feature>
<feature type="helix" evidence="16">
    <location>
        <begin position="1554"/>
        <end position="1571"/>
    </location>
</feature>
<feature type="strand" evidence="16">
    <location>
        <begin position="1572"/>
        <end position="1574"/>
    </location>
</feature>
<feature type="helix" evidence="16">
    <location>
        <begin position="1576"/>
        <end position="1584"/>
    </location>
</feature>
<feature type="helix" evidence="16">
    <location>
        <begin position="1594"/>
        <end position="1608"/>
    </location>
</feature>
<organism>
    <name type="scientific">Rattus norvegicus</name>
    <name type="common">Rat</name>
    <dbReference type="NCBI Taxonomy" id="10116"/>
    <lineage>
        <taxon>Eukaryota</taxon>
        <taxon>Metazoa</taxon>
        <taxon>Chordata</taxon>
        <taxon>Craniata</taxon>
        <taxon>Vertebrata</taxon>
        <taxon>Euteleostomi</taxon>
        <taxon>Mammalia</taxon>
        <taxon>Eutheria</taxon>
        <taxon>Euarchontoglires</taxon>
        <taxon>Glires</taxon>
        <taxon>Rodentia</taxon>
        <taxon>Myomorpha</taxon>
        <taxon>Muroidea</taxon>
        <taxon>Muridae</taxon>
        <taxon>Murinae</taxon>
        <taxon>Rattus</taxon>
    </lineage>
</organism>
<accession>Q64605</accession>
<accession>Q07808</accession>
<accession>Q3KRE9</accession>
<accession>Q64621</accession>
<accession>Q64675</accession>
<reference key="1">
    <citation type="journal article" date="1994" name="Biochem. J.">
        <title>Molecular cloning and expression of a unique receptor-like protein-tyrosine-phosphatase in the leucocyte-common-antigen-related phosphate family.</title>
        <authorList>
            <person name="Zhang W.-R."/>
            <person name="Hashimoto N."/>
            <person name="Ahmad F."/>
            <person name="Ding W."/>
            <person name="Goldstein B.J."/>
        </authorList>
    </citation>
    <scope>NUCLEOTIDE SEQUENCE [MRNA] (ISOFORM 2)</scope>
    <scope>CATALYTIC ACTIVITY</scope>
    <scope>FUNCTION</scope>
    <scope>TISSUE SPECIFICITY</scope>
    <source>
        <strain>Sprague-Dawley</strain>
        <tissue>Liver</tissue>
    </source>
</reference>
<reference key="2">
    <citation type="journal article" date="2004" name="Genome Res.">
        <title>The status, quality, and expansion of the NIH full-length cDNA project: the Mammalian Gene Collection (MGC).</title>
        <authorList>
            <consortium name="The MGC Project Team"/>
        </authorList>
    </citation>
    <scope>NUCLEOTIDE SEQUENCE [LARGE SCALE MRNA] (ISOFORM 1)</scope>
    <source>
        <tissue>Prostate</tissue>
    </source>
</reference>
<reference key="3">
    <citation type="journal article" date="2007" name="Biochim. Biophys. Acta">
        <title>PTPsigma binds and dephosphorylates neurotrophin receptors and can suppress NGF-dependent neurite outgrowth from sensory neurons.</title>
        <authorList>
            <person name="Faux C."/>
            <person name="Hawadle M."/>
            <person name="Nixon J."/>
            <person name="Wallace A."/>
            <person name="Lee S."/>
            <person name="Murray S."/>
            <person name="Stoker A."/>
        </authorList>
    </citation>
    <scope>INTERACTION WITH NTRK1 AND NTRK3</scope>
</reference>
<reference key="4">
    <citation type="journal article" date="2012" name="J. Neurochem.">
        <title>Receptor protein tyrosine phosphatase sigma regulates synapse structure, function and plasticity.</title>
        <authorList>
            <person name="Horn K.E."/>
            <person name="Xu B."/>
            <person name="Gobert D."/>
            <person name="Hamam B.N."/>
            <person name="Thompson K.M."/>
            <person name="Wu C.L."/>
            <person name="Bouchard J.F."/>
            <person name="Uetani N."/>
            <person name="Racine R.J."/>
            <person name="Tremblay M.L."/>
            <person name="Ruthazer E.S."/>
            <person name="Chapman C.A."/>
            <person name="Kennedy T.E."/>
        </authorList>
    </citation>
    <scope>SUBCELLULAR LOCATION</scope>
    <scope>TISSUE SPECIFICITY</scope>
</reference>
<reference key="5">
    <citation type="journal article" date="2007" name="J. Struct. Funct. Genomics">
        <title>Structural genomics of protein phosphatases.</title>
        <authorList>
            <person name="Almo S.C."/>
            <person name="Bonanno J.B."/>
            <person name="Sauder J.M."/>
            <person name="Emtage S."/>
            <person name="Dilorenzo T.P."/>
            <person name="Malashkevich V."/>
            <person name="Wasserman S.R."/>
            <person name="Swaminathan S."/>
            <person name="Eswaramoorthy S."/>
            <person name="Agarwal R."/>
            <person name="Kumaran D."/>
            <person name="Madegowda M."/>
            <person name="Ragumani S."/>
            <person name="Patskovsky Y."/>
            <person name="Alvarado J."/>
            <person name="Ramagopal U.A."/>
            <person name="Faber-Barata J."/>
            <person name="Chance M.R."/>
            <person name="Sali A."/>
            <person name="Fiser A."/>
            <person name="Zhang Z.Y."/>
            <person name="Lawrence D.S."/>
            <person name="Burley S.K."/>
        </authorList>
    </citation>
    <scope>X-RAY CRYSTALLOGRAPHY (2.0 ANGSTROMS) OF 1328-1614</scope>
</reference>
<proteinExistence type="evidence at protein level"/>
<protein>
    <recommendedName>
        <fullName>Receptor-type tyrosine-protein phosphatase S</fullName>
        <shortName>R-PTP-S</shortName>
        <ecNumber evidence="13">3.1.3.48</ecNumber>
    </recommendedName>
    <alternativeName>
        <fullName>Leukocyte common antigen-related protein-tyrosine phosphatase 2</fullName>
        <shortName evidence="14">LAR-PTP2</shortName>
    </alternativeName>
    <alternativeName>
        <fullName>Receptor-type tyrosine-protein phosphatase sigma</fullName>
        <shortName>R-PTP-sigma</shortName>
    </alternativeName>
</protein>
<comment type="function">
    <text evidence="2 3 13">Cell surface receptor that binds to glycosaminoglycans, including chondroitin sulfate proteoglycans and heparan sulfate proteoglycans. Binding to chondroitin sulfate and heparan sulfate proteoglycans has opposite effects on PTPRS oligomerization and regulation of neurite outgrowth. Contributes to the inhibition of neurite and axonal outgrowth by chondroitin sulfate proteoglycans, also after nerve transection. Plays a role in stimulating neurite outgrowth in response to the heparan sulfate proteoglycan GPC2. Required for normal brain development, especially for normal development of the pituitary gland and the olfactory bulb (By similarity). Functions as tyrosine phosphatase (PubMed:8068021). Mediates dephosphorylation of NTRK1, NTRK2 and NTRK3 (By similarity). Plays a role in down-regulation of signaling cascades that lead to the activation of Akt and MAP kinases. Down-regulates TLR9-mediated activation of NF-kappa-B, as well as production of TNF, interferon alpha and interferon beta (By similarity).</text>
</comment>
<comment type="catalytic activity">
    <reaction evidence="9 13">
        <text>O-phospho-L-tyrosyl-[protein] + H2O = L-tyrosyl-[protein] + phosphate</text>
        <dbReference type="Rhea" id="RHEA:10684"/>
        <dbReference type="Rhea" id="RHEA-COMP:10136"/>
        <dbReference type="Rhea" id="RHEA-COMP:20101"/>
        <dbReference type="ChEBI" id="CHEBI:15377"/>
        <dbReference type="ChEBI" id="CHEBI:43474"/>
        <dbReference type="ChEBI" id="CHEBI:46858"/>
        <dbReference type="ChEBI" id="CHEBI:61978"/>
        <dbReference type="EC" id="3.1.3.48"/>
    </reaction>
</comment>
<comment type="subunit">
    <text evidence="2 4 11">Binding to large heparan sulfate proteoglycan structures promotes oligomerization. Binding to chondroitin sulfate proteoglycan does not lead to oligomerization (By similarity). Interacts (via Ig-like domains) with NTRK1 and NTRK3, but does not form detectable complexes with NTRK2 (PubMed:17967490). Interacts with PPFIA1, PPFIA2 and PPFIA3 (By similarity).</text>
</comment>
<comment type="subcellular location">
    <subcellularLocation>
        <location evidence="12">Cell membrane</location>
        <topology evidence="2">Single-pass type I membrane protein</topology>
    </subcellularLocation>
    <subcellularLocation>
        <location evidence="2">Cell projection</location>
        <location evidence="2">Axon</location>
    </subcellularLocation>
    <subcellularLocation>
        <location evidence="2">Perikaryon</location>
    </subcellularLocation>
    <subcellularLocation>
        <location evidence="12">Cytoplasmic vesicle</location>
        <location evidence="12">Secretory vesicle</location>
        <location evidence="12">Synaptic vesicle membrane</location>
    </subcellularLocation>
    <subcellularLocation>
        <location evidence="12">Synapse</location>
        <location evidence="12">Synaptosome</location>
    </subcellularLocation>
    <subcellularLocation>
        <location evidence="12">Postsynaptic density</location>
    </subcellularLocation>
    <subcellularLocation>
        <location evidence="2">Cell projection</location>
        <location evidence="2">Neuron projection</location>
    </subcellularLocation>
    <subcellularLocation>
        <location evidence="2">Cell projection</location>
        <location evidence="2">Growth cone</location>
    </subcellularLocation>
    <text evidence="2">Is rapidly internalized when dendritic cells are stimulated with the TLR9 ligand cytidine-phosphate-guanosine (CpG). Detected in a punctate pattern along neurites and axon growth cones.</text>
</comment>
<comment type="alternative products">
    <event type="alternative splicing"/>
    <isoform>
        <id>Q64605-1</id>
        <name>1</name>
        <sequence type="displayed"/>
    </isoform>
    <isoform>
        <id>Q64605-2</id>
        <name>2</name>
        <sequence type="described" ref="VSP_026932"/>
    </isoform>
</comment>
<comment type="tissue specificity">
    <text evidence="12 13">Detected in brain neocortex (at protein level) (PubMed:22519304). Detected in heart, testis and liver (PubMed:8068021). Detected at lower levels in skeletal muscle, brain, spleen and kidney (PubMed:8068021).</text>
</comment>
<comment type="PTM">
    <text evidence="1">A cleavage occurs, separating the extracellular domain from the transmembrane segment. This process called 'ectodomain shedding' is thought to be involved in receptor desensitization, signal transduction and/or membrane localization (By similarity).</text>
</comment>
<comment type="similarity">
    <text evidence="15">Belongs to the protein-tyrosine phosphatase family. Receptor class 2A subfamily.</text>
</comment>